<gene>
    <name type="primary">IL2</name>
</gene>
<name>IL2_HYLLA</name>
<evidence type="ECO:0000250" key="1"/>
<evidence type="ECO:0000250" key="2">
    <source>
        <dbReference type="UniProtKB" id="P60568"/>
    </source>
</evidence>
<evidence type="ECO:0000305" key="3"/>
<proteinExistence type="evidence at transcript level"/>
<accession>P60569</accession>
<accession>P01585</accession>
<protein>
    <recommendedName>
        <fullName>Interleukin-2</fullName>
        <shortName>IL-2</shortName>
    </recommendedName>
    <alternativeName>
        <fullName>T-cell growth factor</fullName>
        <shortName>TCGF</shortName>
    </alternativeName>
</protein>
<feature type="signal peptide" evidence="1">
    <location>
        <begin position="1"/>
        <end position="20"/>
    </location>
</feature>
<feature type="chain" id="PRO_0000015485" description="Interleukin-2">
    <location>
        <begin position="21"/>
        <end position="153"/>
    </location>
</feature>
<feature type="glycosylation site" description="O-linked (GalNAc...) threonine" evidence="1">
    <location>
        <position position="23"/>
    </location>
</feature>
<feature type="disulfide bond" evidence="1">
    <location>
        <begin position="78"/>
        <end position="125"/>
    </location>
</feature>
<reference key="1">
    <citation type="journal article" date="1985" name="Proc. Natl. Acad. Sci. U.S.A.">
        <title>A viral long terminal repeat in the interleukin 2 gene of a cell line that constitutively produces interleukin 2.</title>
        <authorList>
            <person name="Chen S.J."/>
            <person name="Holbrook N.J."/>
            <person name="Mitchell K.F."/>
            <person name="Vallone C.A."/>
            <person name="Greengard J.S."/>
            <person name="Crabtree G.R."/>
            <person name="Lin Y."/>
        </authorList>
    </citation>
    <scope>NUCLEOTIDE SEQUENCE [MRNA]</scope>
</reference>
<sequence>MYRMQLLSCIALSLALVTNSAPTSSSTKKTQLQLEHLLLDLQMILNGINNYKNPKLTRMLTFKFYMPKKATELKHLQCLEEELKPLEEVLNLAQSKNFHLRPRDLISNINVIVLELKGSETTFMCEYADETATIVEFLNRWITFCQSIISTLT</sequence>
<organism>
    <name type="scientific">Hylobates lar</name>
    <name type="common">Lar gibbon</name>
    <name type="synonym">White-handed gibbon</name>
    <dbReference type="NCBI Taxonomy" id="9580"/>
    <lineage>
        <taxon>Eukaryota</taxon>
        <taxon>Metazoa</taxon>
        <taxon>Chordata</taxon>
        <taxon>Craniata</taxon>
        <taxon>Vertebrata</taxon>
        <taxon>Euteleostomi</taxon>
        <taxon>Mammalia</taxon>
        <taxon>Eutheria</taxon>
        <taxon>Euarchontoglires</taxon>
        <taxon>Primates</taxon>
        <taxon>Haplorrhini</taxon>
        <taxon>Catarrhini</taxon>
        <taxon>Hylobatidae</taxon>
        <taxon>Hylobates</taxon>
    </lineage>
</organism>
<dbReference type="EMBL" id="K03174">
    <property type="protein sequence ID" value="AAA35453.1"/>
    <property type="molecule type" value="mRNA"/>
</dbReference>
<dbReference type="EMBL" id="M11144">
    <property type="protein sequence ID" value="AAA35454.1"/>
    <property type="molecule type" value="mRNA"/>
</dbReference>
<dbReference type="PIR" id="A94067">
    <property type="entry name" value="ICGI2"/>
</dbReference>
<dbReference type="SMR" id="P60569"/>
<dbReference type="GlyCosmos" id="P60569">
    <property type="glycosylation" value="1 site, No reported glycans"/>
</dbReference>
<dbReference type="GO" id="GO:0005615">
    <property type="term" value="C:extracellular space"/>
    <property type="evidence" value="ECO:0007669"/>
    <property type="project" value="UniProtKB-KW"/>
</dbReference>
<dbReference type="GO" id="GO:0005125">
    <property type="term" value="F:cytokine activity"/>
    <property type="evidence" value="ECO:0007669"/>
    <property type="project" value="UniProtKB-KW"/>
</dbReference>
<dbReference type="GO" id="GO:0008083">
    <property type="term" value="F:growth factor activity"/>
    <property type="evidence" value="ECO:0007669"/>
    <property type="project" value="UniProtKB-KW"/>
</dbReference>
<dbReference type="GO" id="GO:0005134">
    <property type="term" value="F:interleukin-2 receptor binding"/>
    <property type="evidence" value="ECO:0007669"/>
    <property type="project" value="InterPro"/>
</dbReference>
<dbReference type="GO" id="GO:0002250">
    <property type="term" value="P:adaptive immune response"/>
    <property type="evidence" value="ECO:0007669"/>
    <property type="project" value="UniProtKB-KW"/>
</dbReference>
<dbReference type="FunFam" id="1.20.1250.10:FF:000025">
    <property type="entry name" value="Interleukin-2"/>
    <property type="match status" value="1"/>
</dbReference>
<dbReference type="Gene3D" id="1.20.1250.10">
    <property type="match status" value="1"/>
</dbReference>
<dbReference type="InterPro" id="IPR009079">
    <property type="entry name" value="4_helix_cytokine-like_core"/>
</dbReference>
<dbReference type="InterPro" id="IPR000779">
    <property type="entry name" value="IL-2"/>
</dbReference>
<dbReference type="InterPro" id="IPR030477">
    <property type="entry name" value="IL-2_CS"/>
</dbReference>
<dbReference type="PANTHER" id="PTHR48487">
    <property type="entry name" value="INTERLEUKIN-2"/>
    <property type="match status" value="1"/>
</dbReference>
<dbReference type="PANTHER" id="PTHR48487:SF1">
    <property type="entry name" value="INTERLEUKIN-2"/>
    <property type="match status" value="1"/>
</dbReference>
<dbReference type="Pfam" id="PF00715">
    <property type="entry name" value="IL2"/>
    <property type="match status" value="1"/>
</dbReference>
<dbReference type="PRINTS" id="PR00265">
    <property type="entry name" value="INTERLEUKIN2"/>
</dbReference>
<dbReference type="SMART" id="SM00189">
    <property type="entry name" value="IL2"/>
    <property type="match status" value="1"/>
</dbReference>
<dbReference type="SUPFAM" id="SSF47266">
    <property type="entry name" value="4-helical cytokines"/>
    <property type="match status" value="1"/>
</dbReference>
<dbReference type="PROSITE" id="PS00424">
    <property type="entry name" value="INTERLEUKIN_2"/>
    <property type="match status" value="1"/>
</dbReference>
<keyword id="KW-1064">Adaptive immunity</keyword>
<keyword id="KW-0202">Cytokine</keyword>
<keyword id="KW-1015">Disulfide bond</keyword>
<keyword id="KW-0325">Glycoprotein</keyword>
<keyword id="KW-0339">Growth factor</keyword>
<keyword id="KW-0391">Immunity</keyword>
<keyword id="KW-0964">Secreted</keyword>
<keyword id="KW-0732">Signal</keyword>
<comment type="function">
    <text evidence="2">Cytokine produced by activated CD4-positive helper T-cells and to a lesser extend activated CD8-positive T-cells and natural killer (NK) cells that plays pivotal roles in the immune response and tolerance. Binds to a receptor complex composed of either the high-affinity trimeric IL-2R (IL2RA/CD25, IL2RB/CD122 and IL2RG/CD132) or the low-affinity dimeric IL-2R (IL2RB and IL2RG). Interaction with the receptor leads to oligomerization and conformation changes in the IL-2R subunits resulting in downstream signaling starting with phosphorylation of JAK1 and JAK3. In turn, JAK1 and JAK3 phosphorylate the receptor to form a docking site leading to the phosphorylation of several substrates including STAT5. This process leads to activation of several pathways including STAT, phosphoinositide-3-kinase/PI3K and mitogen-activated protein kinase/MAPK pathways. Functions as a T-cell growth factor and can increase NK-cell cytolytic activity as well. Promotes strong proliferation of activated B-cells and subsequently immunoglobulin production. Plays a pivotal role in regulating the adaptive immune system by controlling the survival and proliferation of regulatory T-cells, which are required for the maintenance of immune tolerance. Moreover, participates in the differentiation and homeostasis of effector T-cell subsets, including Th1, Th2, Th17 as well as memory CD8-positive T-cells.</text>
</comment>
<comment type="subcellular location">
    <subcellularLocation>
        <location>Secreted</location>
    </subcellularLocation>
</comment>
<comment type="similarity">
    <text evidence="3">Belongs to the IL-2 family.</text>
</comment>